<protein>
    <recommendedName>
        <fullName evidence="1">Ion-translocating oxidoreductase complex subunit D</fullName>
        <ecNumber evidence="1">7.-.-.-</ecNumber>
    </recommendedName>
    <alternativeName>
        <fullName evidence="1">Rnf electron transport complex subunit D</fullName>
    </alternativeName>
</protein>
<keyword id="KW-0997">Cell inner membrane</keyword>
<keyword id="KW-1003">Cell membrane</keyword>
<keyword id="KW-0249">Electron transport</keyword>
<keyword id="KW-0285">Flavoprotein</keyword>
<keyword id="KW-0288">FMN</keyword>
<keyword id="KW-0472">Membrane</keyword>
<keyword id="KW-0597">Phosphoprotein</keyword>
<keyword id="KW-1185">Reference proteome</keyword>
<keyword id="KW-1278">Translocase</keyword>
<keyword id="KW-0812">Transmembrane</keyword>
<keyword id="KW-1133">Transmembrane helix</keyword>
<keyword id="KW-0813">Transport</keyword>
<reference key="1">
    <citation type="journal article" date="2008" name="J. Bacteriol.">
        <title>Insights into plant cell wall degradation from the genome sequence of the soil bacterium Cellvibrio japonicus.</title>
        <authorList>
            <person name="DeBoy R.T."/>
            <person name="Mongodin E.F."/>
            <person name="Fouts D.E."/>
            <person name="Tailford L.E."/>
            <person name="Khouri H."/>
            <person name="Emerson J.B."/>
            <person name="Mohamoud Y."/>
            <person name="Watkins K."/>
            <person name="Henrissat B."/>
            <person name="Gilbert H.J."/>
            <person name="Nelson K.E."/>
        </authorList>
    </citation>
    <scope>NUCLEOTIDE SEQUENCE [LARGE SCALE GENOMIC DNA]</scope>
    <source>
        <strain>Ueda107</strain>
    </source>
</reference>
<sequence>MALLNITSPHAQGANRTSRLMLLVVYATIPGMFTMTWFFGPGVLVNVLLASISCMLFEALAIKARQRPVGFYLRDFSALVTGVLIGVSLPPYCPWWLLISGSFIAIILAKQLYGGMGFNPFNPAMVAYALLLVSFPVEMTQWAQPKPLWVDGQLPGLMDTLAKVFSGAPIDGYSGATALDIIKQNKGLVLGDLYQQQPLLAEGRWASAGWEWVNIAFLFGGLYLLYKKVYTWHAPVSMLLALALMAALFYDSGSSSSSGSPLFHLLTGATMLGAFFIVTDPVSSTVSTKGRVIYGALIGMLVYVIRTWGSSYPDGVAFAVLLMNFAAPFIDYYTTPRTYGHKKPRRATDSTPRNGH</sequence>
<proteinExistence type="inferred from homology"/>
<comment type="function">
    <text evidence="1">Part of a membrane-bound complex that couples electron transfer with translocation of ions across the membrane.</text>
</comment>
<comment type="cofactor">
    <cofactor evidence="1">
        <name>FMN</name>
        <dbReference type="ChEBI" id="CHEBI:58210"/>
    </cofactor>
</comment>
<comment type="subunit">
    <text evidence="1">The complex is composed of six subunits: RnfA, RnfB, RnfC, RnfD, RnfE and RnfG.</text>
</comment>
<comment type="subcellular location">
    <subcellularLocation>
        <location evidence="1">Cell inner membrane</location>
        <topology evidence="1">Multi-pass membrane protein</topology>
    </subcellularLocation>
</comment>
<comment type="similarity">
    <text evidence="1">Belongs to the NqrB/RnfD family.</text>
</comment>
<feature type="chain" id="PRO_1000191669" description="Ion-translocating oxidoreductase complex subunit D">
    <location>
        <begin position="1"/>
        <end position="356"/>
    </location>
</feature>
<feature type="transmembrane region" description="Helical" evidence="1">
    <location>
        <begin position="20"/>
        <end position="40"/>
    </location>
</feature>
<feature type="transmembrane region" description="Helical" evidence="1">
    <location>
        <begin position="42"/>
        <end position="62"/>
    </location>
</feature>
<feature type="transmembrane region" description="Helical" evidence="1">
    <location>
        <begin position="68"/>
        <end position="88"/>
    </location>
</feature>
<feature type="transmembrane region" description="Helical" evidence="1">
    <location>
        <begin position="117"/>
        <end position="137"/>
    </location>
</feature>
<feature type="transmembrane region" description="Helical" evidence="1">
    <location>
        <begin position="205"/>
        <end position="225"/>
    </location>
</feature>
<feature type="transmembrane region" description="Helical" evidence="1">
    <location>
        <begin position="229"/>
        <end position="249"/>
    </location>
</feature>
<feature type="transmembrane region" description="Helical" evidence="1">
    <location>
        <begin position="259"/>
        <end position="279"/>
    </location>
</feature>
<feature type="transmembrane region" description="Helical" evidence="1">
    <location>
        <begin position="292"/>
        <end position="312"/>
    </location>
</feature>
<feature type="transmembrane region" description="Helical" evidence="1">
    <location>
        <begin position="315"/>
        <end position="335"/>
    </location>
</feature>
<feature type="modified residue" description="FMN phosphoryl threonine" evidence="1">
    <location>
        <position position="177"/>
    </location>
</feature>
<accession>B3PB33</accession>
<dbReference type="EC" id="7.-.-.-" evidence="1"/>
<dbReference type="EMBL" id="CP000934">
    <property type="protein sequence ID" value="ACE85427.1"/>
    <property type="molecule type" value="Genomic_DNA"/>
</dbReference>
<dbReference type="RefSeq" id="WP_012486653.1">
    <property type="nucleotide sequence ID" value="NC_010995.1"/>
</dbReference>
<dbReference type="SMR" id="B3PB33"/>
<dbReference type="STRING" id="498211.CJA_1005"/>
<dbReference type="KEGG" id="cja:CJA_1005"/>
<dbReference type="eggNOG" id="COG4658">
    <property type="taxonomic scope" value="Bacteria"/>
</dbReference>
<dbReference type="HOGENOM" id="CLU_042020_0_0_6"/>
<dbReference type="OrthoDB" id="9776359at2"/>
<dbReference type="Proteomes" id="UP000001036">
    <property type="component" value="Chromosome"/>
</dbReference>
<dbReference type="GO" id="GO:0005886">
    <property type="term" value="C:plasma membrane"/>
    <property type="evidence" value="ECO:0007669"/>
    <property type="project" value="UniProtKB-SubCell"/>
</dbReference>
<dbReference type="GO" id="GO:0022900">
    <property type="term" value="P:electron transport chain"/>
    <property type="evidence" value="ECO:0007669"/>
    <property type="project" value="UniProtKB-UniRule"/>
</dbReference>
<dbReference type="GO" id="GO:0055085">
    <property type="term" value="P:transmembrane transport"/>
    <property type="evidence" value="ECO:0007669"/>
    <property type="project" value="InterPro"/>
</dbReference>
<dbReference type="HAMAP" id="MF_00462">
    <property type="entry name" value="RsxD_RnfD"/>
    <property type="match status" value="1"/>
</dbReference>
<dbReference type="InterPro" id="IPR004338">
    <property type="entry name" value="NqrB/RnfD"/>
</dbReference>
<dbReference type="InterPro" id="IPR011303">
    <property type="entry name" value="RnfD_bac"/>
</dbReference>
<dbReference type="NCBIfam" id="NF002011">
    <property type="entry name" value="PRK00816.1"/>
    <property type="match status" value="1"/>
</dbReference>
<dbReference type="NCBIfam" id="TIGR01946">
    <property type="entry name" value="rnfD"/>
    <property type="match status" value="1"/>
</dbReference>
<dbReference type="PANTHER" id="PTHR30578">
    <property type="entry name" value="ELECTRON TRANSPORT COMPLEX PROTEIN RNFD"/>
    <property type="match status" value="1"/>
</dbReference>
<dbReference type="PANTHER" id="PTHR30578:SF0">
    <property type="entry name" value="ION-TRANSLOCATING OXIDOREDUCTASE COMPLEX SUBUNIT D"/>
    <property type="match status" value="1"/>
</dbReference>
<dbReference type="Pfam" id="PF03116">
    <property type="entry name" value="NQR2_RnfD_RnfE"/>
    <property type="match status" value="1"/>
</dbReference>
<evidence type="ECO:0000255" key="1">
    <source>
        <dbReference type="HAMAP-Rule" id="MF_00462"/>
    </source>
</evidence>
<name>RNFD_CELJU</name>
<gene>
    <name evidence="1" type="primary">rnfD</name>
    <name type="ordered locus">CJA_1005</name>
</gene>
<organism>
    <name type="scientific">Cellvibrio japonicus (strain Ueda107)</name>
    <name type="common">Pseudomonas fluorescens subsp. cellulosa</name>
    <dbReference type="NCBI Taxonomy" id="498211"/>
    <lineage>
        <taxon>Bacteria</taxon>
        <taxon>Pseudomonadati</taxon>
        <taxon>Pseudomonadota</taxon>
        <taxon>Gammaproteobacteria</taxon>
        <taxon>Cellvibrionales</taxon>
        <taxon>Cellvibrionaceae</taxon>
        <taxon>Cellvibrio</taxon>
    </lineage>
</organism>